<accession>P37351</accession>
<accession>O32564</accession>
<accession>Q2M6L3</accession>
<gene>
    <name evidence="7" type="primary">rpiB</name>
    <name type="synonym">yjcA</name>
    <name type="ordered locus">b4090</name>
    <name type="ordered locus">JW4051</name>
</gene>
<feature type="chain" id="PRO_0000208163" description="Ribose-5-phosphate isomerase B">
    <location>
        <begin position="1"/>
        <end position="149"/>
    </location>
</feature>
<feature type="active site" description="Proton acceptor" evidence="9">
    <location>
        <position position="66"/>
    </location>
</feature>
<feature type="active site" description="Proton donor" evidence="9">
    <location>
        <position position="99"/>
    </location>
</feature>
<feature type="binding site" evidence="1">
    <location>
        <begin position="9"/>
        <end position="10"/>
    </location>
    <ligand>
        <name>D-ribulose 5-phosphate</name>
        <dbReference type="ChEBI" id="CHEBI:58121"/>
    </ligand>
</feature>
<feature type="binding site" evidence="1">
    <location>
        <begin position="67"/>
        <end position="71"/>
    </location>
    <ligand>
        <name>D-ribulose 5-phosphate</name>
        <dbReference type="ChEBI" id="CHEBI:58121"/>
    </ligand>
</feature>
<feature type="binding site" evidence="1">
    <location>
        <position position="100"/>
    </location>
    <ligand>
        <name>D-ribulose 5-phosphate</name>
        <dbReference type="ChEBI" id="CHEBI:58121"/>
    </ligand>
</feature>
<feature type="binding site" evidence="1">
    <location>
        <position position="110"/>
    </location>
    <ligand>
        <name>D-ribulose 5-phosphate</name>
        <dbReference type="ChEBI" id="CHEBI:58121"/>
    </ligand>
</feature>
<feature type="binding site" evidence="1">
    <location>
        <position position="133"/>
    </location>
    <ligand>
        <name>D-ribulose 5-phosphate</name>
        <dbReference type="ChEBI" id="CHEBI:58121"/>
    </ligand>
</feature>
<feature type="binding site" evidence="1">
    <location>
        <position position="137"/>
    </location>
    <ligand>
        <name>D-ribulose 5-phosphate</name>
        <dbReference type="ChEBI" id="CHEBI:58121"/>
    </ligand>
</feature>
<feature type="mutagenesis site" description="Strongly reduced enzyme activity." evidence="4">
    <original>H</original>
    <variation>N</variation>
    <location>
        <position position="99"/>
    </location>
</feature>
<feature type="strand" evidence="10">
    <location>
        <begin position="3"/>
        <end position="8"/>
    </location>
</feature>
<feature type="helix" evidence="10">
    <location>
        <begin position="12"/>
        <end position="15"/>
    </location>
</feature>
<feature type="helix" evidence="10">
    <location>
        <begin position="16"/>
        <end position="25"/>
    </location>
</feature>
<feature type="strand" evidence="10">
    <location>
        <begin position="29"/>
        <end position="32"/>
    </location>
</feature>
<feature type="strand" evidence="10">
    <location>
        <begin position="37"/>
        <end position="39"/>
    </location>
</feature>
<feature type="helix" evidence="10">
    <location>
        <begin position="43"/>
        <end position="55"/>
    </location>
</feature>
<feature type="strand" evidence="10">
    <location>
        <begin position="58"/>
        <end position="69"/>
    </location>
</feature>
<feature type="helix" evidence="10">
    <location>
        <begin position="70"/>
        <end position="77"/>
    </location>
</feature>
<feature type="strand" evidence="10">
    <location>
        <begin position="84"/>
        <end position="86"/>
    </location>
</feature>
<feature type="helix" evidence="10">
    <location>
        <begin position="90"/>
        <end position="100"/>
    </location>
</feature>
<feature type="strand" evidence="10">
    <location>
        <begin position="104"/>
        <end position="108"/>
    </location>
</feature>
<feature type="turn" evidence="10">
    <location>
        <begin position="109"/>
        <end position="111"/>
    </location>
</feature>
<feature type="helix" evidence="10">
    <location>
        <begin position="114"/>
        <end position="126"/>
    </location>
</feature>
<feature type="helix" evidence="10">
    <location>
        <begin position="134"/>
        <end position="145"/>
    </location>
</feature>
<dbReference type="EC" id="5.3.1.6" evidence="2 4"/>
<dbReference type="EMBL" id="X82203">
    <property type="protein sequence ID" value="CAA57688.1"/>
    <property type="molecule type" value="Genomic_DNA"/>
</dbReference>
<dbReference type="EMBL" id="U14003">
    <property type="protein sequence ID" value="AAA96989.1"/>
    <property type="molecule type" value="Genomic_DNA"/>
</dbReference>
<dbReference type="EMBL" id="U00096">
    <property type="protein sequence ID" value="AAC77051.1"/>
    <property type="molecule type" value="Genomic_DNA"/>
</dbReference>
<dbReference type="EMBL" id="AP009048">
    <property type="protein sequence ID" value="BAE78093.1"/>
    <property type="molecule type" value="Genomic_DNA"/>
</dbReference>
<dbReference type="EMBL" id="D90227">
    <property type="protein sequence ID" value="BAA21501.1"/>
    <property type="molecule type" value="Genomic_DNA"/>
</dbReference>
<dbReference type="PIR" id="JC6054">
    <property type="entry name" value="JC6054"/>
</dbReference>
<dbReference type="RefSeq" id="NP_418514.1">
    <property type="nucleotide sequence ID" value="NC_000913.3"/>
</dbReference>
<dbReference type="RefSeq" id="WP_000716794.1">
    <property type="nucleotide sequence ID" value="NZ_STEB01000014.1"/>
</dbReference>
<dbReference type="PDB" id="1NN4">
    <property type="method" value="X-ray"/>
    <property type="resolution" value="2.20 A"/>
    <property type="chains" value="A/B/C/D=1-149"/>
</dbReference>
<dbReference type="PDB" id="2VVR">
    <property type="method" value="X-ray"/>
    <property type="resolution" value="2.10 A"/>
    <property type="chains" value="A/B/C/D/E/F=1-149"/>
</dbReference>
<dbReference type="PDBsum" id="1NN4"/>
<dbReference type="PDBsum" id="2VVR"/>
<dbReference type="SMR" id="P37351"/>
<dbReference type="BioGRID" id="4262683">
    <property type="interactions" value="7"/>
</dbReference>
<dbReference type="DIP" id="DIP-10740N"/>
<dbReference type="FunCoup" id="P37351">
    <property type="interactions" value="541"/>
</dbReference>
<dbReference type="IntAct" id="P37351">
    <property type="interactions" value="3"/>
</dbReference>
<dbReference type="STRING" id="511145.b4090"/>
<dbReference type="jPOST" id="P37351"/>
<dbReference type="PaxDb" id="511145-b4090"/>
<dbReference type="EnsemblBacteria" id="AAC77051">
    <property type="protein sequence ID" value="AAC77051"/>
    <property type="gene ID" value="b4090"/>
</dbReference>
<dbReference type="GeneID" id="948602"/>
<dbReference type="KEGG" id="ecj:JW4051"/>
<dbReference type="KEGG" id="eco:b4090"/>
<dbReference type="KEGG" id="ecoc:C3026_22110"/>
<dbReference type="PATRIC" id="fig|1411691.4.peg.2610"/>
<dbReference type="EchoBASE" id="EB1774"/>
<dbReference type="eggNOG" id="COG0698">
    <property type="taxonomic scope" value="Bacteria"/>
</dbReference>
<dbReference type="HOGENOM" id="CLU_091396_4_1_6"/>
<dbReference type="InParanoid" id="P37351"/>
<dbReference type="OMA" id="VREWLTY"/>
<dbReference type="OrthoDB" id="1778624at2"/>
<dbReference type="PhylomeDB" id="P37351"/>
<dbReference type="BioCyc" id="EcoCyc:RIB5PISOMB-MONOMER"/>
<dbReference type="BioCyc" id="MetaCyc:RIB5PISOMB-MONOMER"/>
<dbReference type="SABIO-RK" id="P37351"/>
<dbReference type="UniPathway" id="UPA00115">
    <property type="reaction ID" value="UER00412"/>
</dbReference>
<dbReference type="EvolutionaryTrace" id="P37351"/>
<dbReference type="PRO" id="PR:P37351"/>
<dbReference type="Proteomes" id="UP000000625">
    <property type="component" value="Chromosome"/>
</dbReference>
<dbReference type="GO" id="GO:0008786">
    <property type="term" value="F:D-allose 6-phosphate isomerase activity"/>
    <property type="evidence" value="ECO:0000314"/>
    <property type="project" value="EcoCyc"/>
</dbReference>
<dbReference type="GO" id="GO:0004751">
    <property type="term" value="F:ribose-5-phosphate isomerase activity"/>
    <property type="evidence" value="ECO:0000314"/>
    <property type="project" value="EcoCyc"/>
</dbReference>
<dbReference type="GO" id="GO:0019316">
    <property type="term" value="P:D-allose catabolic process"/>
    <property type="evidence" value="ECO:0000315"/>
    <property type="project" value="EcoCyc"/>
</dbReference>
<dbReference type="GO" id="GO:0009052">
    <property type="term" value="P:pentose-phosphate shunt, non-oxidative branch"/>
    <property type="evidence" value="ECO:0000318"/>
    <property type="project" value="GO_Central"/>
</dbReference>
<dbReference type="FunFam" id="3.40.1400.10:FF:000001">
    <property type="entry name" value="Ribose 5-phosphate isomerase B"/>
    <property type="match status" value="1"/>
</dbReference>
<dbReference type="Gene3D" id="3.40.1400.10">
    <property type="entry name" value="Sugar-phosphate isomerase, RpiB/LacA/LacB"/>
    <property type="match status" value="1"/>
</dbReference>
<dbReference type="InterPro" id="IPR004785">
    <property type="entry name" value="RpiB"/>
</dbReference>
<dbReference type="InterPro" id="IPR003500">
    <property type="entry name" value="RpiB_LacA_LacB"/>
</dbReference>
<dbReference type="InterPro" id="IPR036569">
    <property type="entry name" value="RpiB_LacA_LacB_sf"/>
</dbReference>
<dbReference type="InterPro" id="IPR051812">
    <property type="entry name" value="SPI_LacAB/RpiB"/>
</dbReference>
<dbReference type="NCBIfam" id="NF004051">
    <property type="entry name" value="PRK05571.1"/>
    <property type="match status" value="1"/>
</dbReference>
<dbReference type="NCBIfam" id="TIGR01120">
    <property type="entry name" value="rpiB"/>
    <property type="match status" value="1"/>
</dbReference>
<dbReference type="NCBIfam" id="TIGR00689">
    <property type="entry name" value="rpiB_lacA_lacB"/>
    <property type="match status" value="1"/>
</dbReference>
<dbReference type="PANTHER" id="PTHR43732:SF1">
    <property type="entry name" value="RIBOSE 5-PHOSPHATE ISOMERASE"/>
    <property type="match status" value="1"/>
</dbReference>
<dbReference type="PANTHER" id="PTHR43732">
    <property type="entry name" value="RIBOSE 5-PHOSPHATE ISOMERASE-RELATED"/>
    <property type="match status" value="1"/>
</dbReference>
<dbReference type="Pfam" id="PF02502">
    <property type="entry name" value="LacAB_rpiB"/>
    <property type="match status" value="1"/>
</dbReference>
<dbReference type="PIRSF" id="PIRSF005384">
    <property type="entry name" value="RpiB_LacA_B"/>
    <property type="match status" value="1"/>
</dbReference>
<dbReference type="SUPFAM" id="SSF89623">
    <property type="entry name" value="Ribose/Galactose isomerase RpiB/AlsB"/>
    <property type="match status" value="1"/>
</dbReference>
<name>RPIB_ECOLI</name>
<keyword id="KW-0002">3D-structure</keyword>
<keyword id="KW-0119">Carbohydrate metabolism</keyword>
<keyword id="KW-0413">Isomerase</keyword>
<keyword id="KW-1185">Reference proteome</keyword>
<protein>
    <recommendedName>
        <fullName evidence="7">Ribose-5-phosphate isomerase B</fullName>
        <ecNumber evidence="2 4">5.3.1.6</ecNumber>
    </recommendedName>
    <alternativeName>
        <fullName evidence="7">Phosphoriboisomerase B</fullName>
    </alternativeName>
</protein>
<proteinExistence type="evidence at protein level"/>
<evidence type="ECO:0000250" key="1">
    <source>
        <dbReference type="UniProtKB" id="P9WKD7"/>
    </source>
</evidence>
<evidence type="ECO:0000269" key="2">
    <source>
    </source>
</evidence>
<evidence type="ECO:0000269" key="3">
    <source>
    </source>
</evidence>
<evidence type="ECO:0000269" key="4">
    <source>
    </source>
</evidence>
<evidence type="ECO:0000269" key="5">
    <source>
    </source>
</evidence>
<evidence type="ECO:0000269" key="6">
    <source>
    </source>
</evidence>
<evidence type="ECO:0000303" key="7">
    <source>
    </source>
</evidence>
<evidence type="ECO:0000305" key="8"/>
<evidence type="ECO:0000305" key="9">
    <source>
    </source>
</evidence>
<evidence type="ECO:0007829" key="10">
    <source>
        <dbReference type="PDB" id="2VVR"/>
    </source>
</evidence>
<organism>
    <name type="scientific">Escherichia coli (strain K12)</name>
    <dbReference type="NCBI Taxonomy" id="83333"/>
    <lineage>
        <taxon>Bacteria</taxon>
        <taxon>Pseudomonadati</taxon>
        <taxon>Pseudomonadota</taxon>
        <taxon>Gammaproteobacteria</taxon>
        <taxon>Enterobacterales</taxon>
        <taxon>Enterobacteriaceae</taxon>
        <taxon>Escherichia</taxon>
    </lineage>
</organism>
<sequence>MKKIAFGCDHVGFILKHEIVAHLVERGVEVIDKGTWSSERTDYPHYASQVALAVAGGEVDGGILICGTGVGISIAANKFAGIRAVVCSEPYSAQLSRQHNDTNVLAFGSRVVGLELAKMIVDAWLGAQYEGGRHQQRVEAITAIEQRRN</sequence>
<comment type="function">
    <text evidence="2 4 5 6">Catalyzes the interconversion of ribulose-5-P and ribose-5-P. It probably also has activity on D-allose 6-phosphate.</text>
</comment>
<comment type="catalytic activity">
    <reaction evidence="2 4">
        <text>aldehydo-D-ribose 5-phosphate = D-ribulose 5-phosphate</text>
        <dbReference type="Rhea" id="RHEA:14657"/>
        <dbReference type="ChEBI" id="CHEBI:58121"/>
        <dbReference type="ChEBI" id="CHEBI:58273"/>
        <dbReference type="EC" id="5.3.1.6"/>
    </reaction>
</comment>
<comment type="catalytic activity">
    <reaction evidence="4">
        <text>D-allose 6-phosphate = D-allulose 6-phosphate</text>
        <dbReference type="Rhea" id="RHEA:28430"/>
        <dbReference type="ChEBI" id="CHEBI:58328"/>
        <dbReference type="ChEBI" id="CHEBI:61519"/>
    </reaction>
</comment>
<comment type="activity regulation">
    <text evidence="2 5">Inhibited by iodoacetate and glucose 6-phosphate.</text>
</comment>
<comment type="biophysicochemical properties">
    <kinetics>
        <KM evidence="2">0.83 mM for D-ribose 5-phosphate (at 37 degrees Celsius)</KM>
        <KM evidence="4">1.23 mM for D-ribose 5-phosphate</KM>
        <KM evidence="4">0.5 mM for D-allose 6-phosphate</KM>
    </kinetics>
    <temperatureDependence>
        <text evidence="2 3 4">After incubation at 45 degrees Celsius for 30 minutes RpiB retains 65% of its original activities. At 60 degrees Celsius RpiB is rapidly inactivated.</text>
    </temperatureDependence>
</comment>
<comment type="pathway">
    <text>Carbohydrate degradation; pentose phosphate pathway; D-ribose 5-phosphate from D-ribulose 5-phosphate (non-oxidative stage): step 1/1.</text>
</comment>
<comment type="subunit">
    <text evidence="3 4">Homodimer, and homotetramer.</text>
</comment>
<comment type="interaction">
    <interactant intactId="EBI-557460">
        <id>P37351</id>
    </interactant>
    <interactant intactId="EBI-546827">
        <id>P0A7J3</id>
        <label>rplJ</label>
    </interactant>
    <organismsDiffer>false</organismsDiffer>
    <experiments>2</experiments>
</comment>
<comment type="induction">
    <text evidence="2 6">Induced by ribose and repressed by RpiR.</text>
</comment>
<comment type="similarity">
    <text evidence="8">Belongs to the LacAB/RpiB family.</text>
</comment>
<reference key="1">
    <citation type="journal article" date="1996" name="J. Bacteriol.">
        <title>Ribose catabolism of Escherichia coli: characterization of the rpiB gene encoding ribose phosphate isomerase B and of the rpiR gene, which is involved in regulation of rpiB expression.</title>
        <authorList>
            <person name="Soerensen K.I."/>
            <person name="Hove-Jensen B."/>
        </authorList>
    </citation>
    <scope>NUCLEOTIDE SEQUENCE [GENOMIC DNA]</scope>
    <scope>FUNCTION</scope>
    <scope>INDUCTION</scope>
    <source>
        <strain>K12</strain>
    </source>
</reference>
<reference key="2">
    <citation type="journal article" date="1995" name="Nucleic Acids Res.">
        <title>Analysis of the Escherichia coli genome VI: DNA sequence of the region from 92.8 through 100 minutes.</title>
        <authorList>
            <person name="Burland V.D."/>
            <person name="Plunkett G. III"/>
            <person name="Sofia H.J."/>
            <person name="Daniels D.L."/>
            <person name="Blattner F.R."/>
        </authorList>
    </citation>
    <scope>NUCLEOTIDE SEQUENCE [LARGE SCALE GENOMIC DNA]</scope>
    <source>
        <strain>K12 / MG1655 / ATCC 47076</strain>
    </source>
</reference>
<reference key="3">
    <citation type="journal article" date="1997" name="Science">
        <title>The complete genome sequence of Escherichia coli K-12.</title>
        <authorList>
            <person name="Blattner F.R."/>
            <person name="Plunkett G. III"/>
            <person name="Bloch C.A."/>
            <person name="Perna N.T."/>
            <person name="Burland V."/>
            <person name="Riley M."/>
            <person name="Collado-Vides J."/>
            <person name="Glasner J.D."/>
            <person name="Rode C.K."/>
            <person name="Mayhew G.F."/>
            <person name="Gregor J."/>
            <person name="Davis N.W."/>
            <person name="Kirkpatrick H.A."/>
            <person name="Goeden M.A."/>
            <person name="Rose D.J."/>
            <person name="Mau B."/>
            <person name="Shao Y."/>
        </authorList>
    </citation>
    <scope>NUCLEOTIDE SEQUENCE [LARGE SCALE GENOMIC DNA]</scope>
    <source>
        <strain>K12 / MG1655 / ATCC 47076</strain>
    </source>
</reference>
<reference key="4">
    <citation type="journal article" date="2006" name="Mol. Syst. Biol.">
        <title>Highly accurate genome sequences of Escherichia coli K-12 strains MG1655 and W3110.</title>
        <authorList>
            <person name="Hayashi K."/>
            <person name="Morooka N."/>
            <person name="Yamamoto Y."/>
            <person name="Fujita K."/>
            <person name="Isono K."/>
            <person name="Choi S."/>
            <person name="Ohtsubo E."/>
            <person name="Baba T."/>
            <person name="Wanner B.L."/>
            <person name="Mori H."/>
            <person name="Horiuchi T."/>
        </authorList>
    </citation>
    <scope>NUCLEOTIDE SEQUENCE [LARGE SCALE GENOMIC DNA]</scope>
    <source>
        <strain>K12 / W3110 / ATCC 27325 / DSM 5911</strain>
    </source>
</reference>
<reference key="5">
    <citation type="journal article" date="1991" name="J. Bacteriol.">
        <title>Molecular analysis of the cryptic and functional phn operons for phosphonate use in Escherichia coli K-12.</title>
        <authorList>
            <person name="Makino K."/>
            <person name="Kim S.K."/>
            <person name="Shinagawa H."/>
            <person name="Amemura M."/>
            <person name="Nakata A."/>
        </authorList>
    </citation>
    <scope>NUCLEOTIDE SEQUENCE [GENOMIC DNA] OF 82-149</scope>
    <source>
        <strain>K12</strain>
    </source>
</reference>
<reference key="6">
    <citation type="journal article" date="1970" name="Biochim. Biophys. Acta">
        <title>Regulation of ribose metabolism in Escherichia coli. II. Evidence for two ribose-5-phosphate isomerase activities.</title>
        <authorList>
            <person name="David J."/>
            <person name="Wiesmeyer H."/>
        </authorList>
    </citation>
    <scope>FUNCTION</scope>
    <scope>ACTIVITY REGULATION</scope>
</reference>
<reference key="7">
    <citation type="journal article" date="1975" name="Eur. J. Biochem.">
        <title>Two ribose-5-phosphate isomerases from Escherichia coli K12: partial characterisation of the enzymes and consideration of their possible physiological roles.</title>
        <authorList>
            <person name="Essenberg M.K."/>
            <person name="Cooper R.A."/>
        </authorList>
    </citation>
    <scope>FUNCTION</scope>
    <scope>CATALYTIC ACTIVITY</scope>
    <scope>ACTIVITY REGULATION</scope>
    <scope>BIOPHYSICOCHEMICAL PROPERTIES</scope>
    <scope>INDUCTION</scope>
</reference>
<reference key="8">
    <citation type="journal article" date="1994" name="Nucleic Acids Res.">
        <title>Intrinsic and extrinsic approaches for detecting genes in a bacterial genome.</title>
        <authorList>
            <person name="Borodovsky M."/>
            <person name="Rudd K.E."/>
            <person name="Koonin E.V."/>
        </authorList>
    </citation>
    <scope>IDENTIFICATION</scope>
</reference>
<reference key="9">
    <citation type="journal article" date="1997" name="J. Bacteriol.">
        <title>The D-allose operon of Escherichia coli K-12.</title>
        <authorList>
            <person name="Kim C."/>
            <person name="Song S."/>
            <person name="Park C."/>
        </authorList>
    </citation>
    <scope>PROBABLE ADDITIONAL FUNCTION</scope>
</reference>
<reference key="10">
    <citation type="journal article" date="2003" name="J. Mol. Biol.">
        <title>The 2.2 A resolution structure of RpiB/AlsB from Escherichia coli illustrates a new approach to the ribose-5-phosphate isomerase reaction.</title>
        <authorList>
            <person name="Zhang R.G."/>
            <person name="Andersson C.E."/>
            <person name="Skarina T."/>
            <person name="Evdokimova E."/>
            <person name="Edwards A.M."/>
            <person name="Joachimiak A."/>
            <person name="Savchenko A."/>
            <person name="Mowbray S.L."/>
        </authorList>
    </citation>
    <scope>X-RAY CRYSTALLOGRAPHY (2.20 ANGSTROMS)</scope>
    <scope>CATALYTIC ACTIVITY</scope>
    <scope>BIOPHYSICOCHEMICAL PROPERTIES</scope>
    <scope>SUBUNIT</scope>
</reference>
<reference key="11">
    <citation type="journal article" date="2008" name="J. Mol. Biol.">
        <title>D-ribose-5-phosphate isomerase B from Escherichia coli is also a functional D-allose-6-phosphate isomerase, while the Mycobacterium tuberculosis enzyme is not.</title>
        <authorList>
            <person name="Roos A.K."/>
            <person name="Mariano S."/>
            <person name="Kowalinski E."/>
            <person name="Salmon L."/>
            <person name="Mowbray S.L."/>
        </authorList>
    </citation>
    <scope>X-RAY CRYSTALLOGRAPHY (2.10 ANGSTROMS)</scope>
    <scope>FUNCTION</scope>
    <scope>CATALYTIC ACTIVITY</scope>
    <scope>BIOPHYSICOCHEMICAL PROPERTIES</scope>
    <scope>MUTAGENESIS OF HIS-99</scope>
    <scope>ACTIVE SITE</scope>
    <scope>SUBUNIT</scope>
</reference>